<sequence length="454" mass="51145">MVRLAAELLLLLGLLLLTLHITVLRGSGASDRQDAAAGNNNLNLESDSTSETSFPLSKEAPEEHQVVHQPFPRQRFPPETGHPSLQRDGPRSFLLDLPNFPDLSKADINGQNPNIQVTIEVVDGPDSEAEKDQHPENKPSWSLPAPDWRAWWQRSLSLARTNSGDQDDKYDSTSDDSNFLSVPRGWDRPAPGHRTFETKEQPEYDSTDGEGDWSLWSVCSVTCGNGNQKRTRSCGYACIATESRTCDRPNCPGIEDTFRTAATEVSLLAGSEEFNATKLFEVDMDSCERWMSCKSEFLKKYMHKVINDLPSCPCSYPTEVAYSTADIFDRIKRKDFRWKDASGPKEKLEIYKPTARYCIRSMLSLESTTLAAQHCCYGDNMQLITRGKGAGTPNLISTEFSAELHYKVDVLPWIICKGDWSRYNEARPPNNGQKCTESPSDEDYIKQFQEAREY</sequence>
<feature type="signal peptide" evidence="1">
    <location>
        <begin position="1"/>
        <end position="29"/>
    </location>
</feature>
<feature type="chain" id="PRO_0000348257" description="Isthmin-1">
    <location>
        <begin position="30"/>
        <end position="454"/>
    </location>
</feature>
<feature type="domain" description="TSP type-1" evidence="2">
    <location>
        <begin position="208"/>
        <end position="252"/>
    </location>
</feature>
<feature type="domain" description="AMOP" evidence="3">
    <location>
        <begin position="279"/>
        <end position="442"/>
    </location>
</feature>
<feature type="region of interest" description="Disordered" evidence="4">
    <location>
        <begin position="29"/>
        <end position="93"/>
    </location>
</feature>
<feature type="region of interest" description="Disordered" evidence="4">
    <location>
        <begin position="125"/>
        <end position="144"/>
    </location>
</feature>
<feature type="region of interest" description="Disordered" evidence="4">
    <location>
        <begin position="161"/>
        <end position="209"/>
    </location>
</feature>
<feature type="compositionally biased region" description="Polar residues" evidence="4">
    <location>
        <begin position="38"/>
        <end position="55"/>
    </location>
</feature>
<feature type="compositionally biased region" description="Basic and acidic residues" evidence="4">
    <location>
        <begin position="128"/>
        <end position="137"/>
    </location>
</feature>
<feature type="disulfide bond" evidence="2">
    <location>
        <begin position="219"/>
        <end position="246"/>
    </location>
</feature>
<feature type="disulfide bond" evidence="2">
    <location>
        <begin position="223"/>
        <end position="251"/>
    </location>
</feature>
<feature type="disulfide bond" evidence="2">
    <location>
        <begin position="234"/>
        <end position="238"/>
    </location>
</feature>
<evidence type="ECO:0000255" key="1"/>
<evidence type="ECO:0000255" key="2">
    <source>
        <dbReference type="PROSITE-ProRule" id="PRU00210"/>
    </source>
</evidence>
<evidence type="ECO:0000255" key="3">
    <source>
        <dbReference type="PROSITE-ProRule" id="PRU00347"/>
    </source>
</evidence>
<evidence type="ECO:0000256" key="4">
    <source>
        <dbReference type="SAM" id="MobiDB-lite"/>
    </source>
</evidence>
<evidence type="ECO:0000269" key="5">
    <source>
    </source>
</evidence>
<evidence type="ECO:0000305" key="6"/>
<proteinExistence type="evidence at protein level"/>
<protein>
    <recommendedName>
        <fullName>Isthmin-1</fullName>
    </recommendedName>
</protein>
<organism>
    <name type="scientific">Mus musculus</name>
    <name type="common">Mouse</name>
    <dbReference type="NCBI Taxonomy" id="10090"/>
    <lineage>
        <taxon>Eukaryota</taxon>
        <taxon>Metazoa</taxon>
        <taxon>Chordata</taxon>
        <taxon>Craniata</taxon>
        <taxon>Vertebrata</taxon>
        <taxon>Euteleostomi</taxon>
        <taxon>Mammalia</taxon>
        <taxon>Eutheria</taxon>
        <taxon>Euarchontoglires</taxon>
        <taxon>Glires</taxon>
        <taxon>Rodentia</taxon>
        <taxon>Myomorpha</taxon>
        <taxon>Muroidea</taxon>
        <taxon>Muridae</taxon>
        <taxon>Murinae</taxon>
        <taxon>Mus</taxon>
        <taxon>Mus</taxon>
    </lineage>
</organism>
<dbReference type="EMBL" id="AL928831">
    <property type="status" value="NOT_ANNOTATED_CDS"/>
    <property type="molecule type" value="Genomic_DNA"/>
</dbReference>
<dbReference type="FunCoup" id="A2ATD1">
    <property type="interactions" value="213"/>
</dbReference>
<dbReference type="STRING" id="10090.ENSMUSP00000139280"/>
<dbReference type="GlyGen" id="A2ATD1">
    <property type="glycosylation" value="1 site, 1 N-linked glycan (1 site)"/>
</dbReference>
<dbReference type="iPTMnet" id="A2ATD1"/>
<dbReference type="PhosphoSitePlus" id="A2ATD1"/>
<dbReference type="PaxDb" id="10090-ENSMUSP00000139280"/>
<dbReference type="ProteomicsDB" id="269339"/>
<dbReference type="Antibodypedia" id="52888">
    <property type="antibodies" value="68 antibodies from 12 providers"/>
</dbReference>
<dbReference type="Ensembl" id="ENSMUST00000099307.4">
    <property type="protein sequence ID" value="ENSMUSP00000096910.4"/>
    <property type="gene ID" value="ENSMUSG00000074766.11"/>
</dbReference>
<dbReference type="AGR" id="MGI:2442963"/>
<dbReference type="MGI" id="MGI:2442963">
    <property type="gene designation" value="Ism1"/>
</dbReference>
<dbReference type="VEuPathDB" id="HostDB:ENSMUSG00000074766"/>
<dbReference type="eggNOG" id="ENOG502QR6G">
    <property type="taxonomic scope" value="Eukaryota"/>
</dbReference>
<dbReference type="GeneTree" id="ENSGT00940000159062"/>
<dbReference type="HOGENOM" id="CLU_030263_0_0_1"/>
<dbReference type="InParanoid" id="A2ATD1"/>
<dbReference type="PhylomeDB" id="A2ATD1"/>
<dbReference type="TreeFam" id="TF331333"/>
<dbReference type="ChiTaRS" id="Ism1">
    <property type="organism name" value="mouse"/>
</dbReference>
<dbReference type="PRO" id="PR:A2ATD1"/>
<dbReference type="Proteomes" id="UP000000589">
    <property type="component" value="Chromosome 2"/>
</dbReference>
<dbReference type="RNAct" id="A2ATD1">
    <property type="molecule type" value="protein"/>
</dbReference>
<dbReference type="Bgee" id="ENSMUSG00000074766">
    <property type="expression patterns" value="Expressed in stroma of bone marrow and 143 other cell types or tissues"/>
</dbReference>
<dbReference type="ExpressionAtlas" id="A2ATD1">
    <property type="expression patterns" value="baseline and differential"/>
</dbReference>
<dbReference type="GO" id="GO:0005576">
    <property type="term" value="C:extracellular region"/>
    <property type="evidence" value="ECO:0007669"/>
    <property type="project" value="UniProtKB-SubCell"/>
</dbReference>
<dbReference type="GO" id="GO:0016525">
    <property type="term" value="P:negative regulation of angiogenesis"/>
    <property type="evidence" value="ECO:0000314"/>
    <property type="project" value="UniProtKB"/>
</dbReference>
<dbReference type="FunFam" id="2.20.100.10:FF:000033">
    <property type="entry name" value="Isthmin 1"/>
    <property type="match status" value="1"/>
</dbReference>
<dbReference type="Gene3D" id="2.20.100.10">
    <property type="entry name" value="Thrombospondin type-1 (TSP1) repeat"/>
    <property type="match status" value="1"/>
</dbReference>
<dbReference type="InterPro" id="IPR005533">
    <property type="entry name" value="AMOP_dom"/>
</dbReference>
<dbReference type="InterPro" id="IPR051867">
    <property type="entry name" value="Angio_Inhib/Adhesion_GPCR"/>
</dbReference>
<dbReference type="InterPro" id="IPR000884">
    <property type="entry name" value="TSP1_rpt"/>
</dbReference>
<dbReference type="InterPro" id="IPR036383">
    <property type="entry name" value="TSP1_rpt_sf"/>
</dbReference>
<dbReference type="PANTHER" id="PTHR10239:SF30">
    <property type="entry name" value="ISTHMIN-1"/>
    <property type="match status" value="1"/>
</dbReference>
<dbReference type="PANTHER" id="PTHR10239">
    <property type="entry name" value="ISTHMIN-2"/>
    <property type="match status" value="1"/>
</dbReference>
<dbReference type="Pfam" id="PF03782">
    <property type="entry name" value="AMOP"/>
    <property type="match status" value="1"/>
</dbReference>
<dbReference type="Pfam" id="PF00090">
    <property type="entry name" value="TSP_1"/>
    <property type="match status" value="1"/>
</dbReference>
<dbReference type="SMART" id="SM00723">
    <property type="entry name" value="AMOP"/>
    <property type="match status" value="1"/>
</dbReference>
<dbReference type="SMART" id="SM00209">
    <property type="entry name" value="TSP1"/>
    <property type="match status" value="1"/>
</dbReference>
<dbReference type="SUPFAM" id="SSF82895">
    <property type="entry name" value="TSP-1 type 1 repeat"/>
    <property type="match status" value="1"/>
</dbReference>
<dbReference type="PROSITE" id="PS50856">
    <property type="entry name" value="AMOP"/>
    <property type="match status" value="1"/>
</dbReference>
<dbReference type="PROSITE" id="PS50092">
    <property type="entry name" value="TSP1"/>
    <property type="match status" value="1"/>
</dbReference>
<gene>
    <name type="primary">Ism1</name>
    <name type="synonym">Ism</name>
</gene>
<keyword id="KW-1015">Disulfide bond</keyword>
<keyword id="KW-1185">Reference proteome</keyword>
<keyword id="KW-0964">Secreted</keyword>
<keyword id="KW-0732">Signal</keyword>
<accession>A2ATD1</accession>
<name>ISM1_MOUSE</name>
<comment type="function">
    <text evidence="5">Acts as an angiogenesis inhibitor.</text>
</comment>
<comment type="subunit">
    <text evidence="5">Interacts with integrin ITGAV/ITGB5.</text>
</comment>
<comment type="subcellular location">
    <subcellularLocation>
        <location evidence="6">Secreted</location>
    </subcellularLocation>
</comment>
<comment type="domain">
    <text evidence="5">The C-terminal AMOP domain plays an important role in the anti-angiogenic function of ISM1.</text>
</comment>
<comment type="similarity">
    <text evidence="6">Belongs to the isthmin family.</text>
</comment>
<reference key="1">
    <citation type="journal article" date="2009" name="PLoS Biol.">
        <title>Lineage-specific biology revealed by a finished genome assembly of the mouse.</title>
        <authorList>
            <person name="Church D.M."/>
            <person name="Goodstadt L."/>
            <person name="Hillier L.W."/>
            <person name="Zody M.C."/>
            <person name="Goldstein S."/>
            <person name="She X."/>
            <person name="Bult C.J."/>
            <person name="Agarwala R."/>
            <person name="Cherry J.L."/>
            <person name="DiCuccio M."/>
            <person name="Hlavina W."/>
            <person name="Kapustin Y."/>
            <person name="Meric P."/>
            <person name="Maglott D."/>
            <person name="Birtle Z."/>
            <person name="Marques A.C."/>
            <person name="Graves T."/>
            <person name="Zhou S."/>
            <person name="Teague B."/>
            <person name="Potamousis K."/>
            <person name="Churas C."/>
            <person name="Place M."/>
            <person name="Herschleb J."/>
            <person name="Runnheim R."/>
            <person name="Forrest D."/>
            <person name="Amos-Landgraf J."/>
            <person name="Schwartz D.C."/>
            <person name="Cheng Z."/>
            <person name="Lindblad-Toh K."/>
            <person name="Eichler E.E."/>
            <person name="Ponting C.P."/>
        </authorList>
    </citation>
    <scope>NUCLEOTIDE SEQUENCE [LARGE SCALE GENOMIC DNA]</scope>
    <source>
        <strain>C57BL/6J</strain>
    </source>
</reference>
<reference key="2">
    <citation type="journal article" date="2002" name="Mech. Dev.">
        <title>Isthmin is a novel secreted protein expressed as part of the Fgf-8 synexpression group in the Xenopus midbrain-hindbrain organizer.</title>
        <authorList>
            <person name="Pera E.M."/>
            <person name="Kim J.I."/>
            <person name="Martinez S.L."/>
            <person name="Brechner M."/>
            <person name="Li S.-Y."/>
            <person name="Wessely O."/>
            <person name="De Robertis E.M."/>
        </authorList>
    </citation>
    <scope>IDENTIFICATION</scope>
</reference>
<reference key="3">
    <citation type="journal article" date="2011" name="J. Cell. Mol. Med.">
        <title>Isthmin is a novel secreted angiogenesis inhibitor that inhibits tumour growth in mice.</title>
        <authorList>
            <person name="Xiang W."/>
            <person name="Ke Z."/>
            <person name="Zhang Y."/>
            <person name="Cheng G.H."/>
            <person name="Irwan I.D."/>
            <person name="Sulochana K.N."/>
            <person name="Potturi P."/>
            <person name="Wang Z."/>
            <person name="Yang H."/>
            <person name="Wang J."/>
            <person name="Zhuo L."/>
            <person name="Kini R.M."/>
            <person name="Ge R."/>
        </authorList>
    </citation>
    <scope>FUNCTION</scope>
    <scope>INTERACTION WITH ITGAV/ITGB5</scope>
    <scope>DOMAIN</scope>
</reference>